<name>MURC_MACCJ</name>
<feature type="chain" id="PRO_1000192098" description="UDP-N-acetylmuramate--L-alanine ligase">
    <location>
        <begin position="1"/>
        <end position="431"/>
    </location>
</feature>
<feature type="binding site" evidence="1">
    <location>
        <begin position="108"/>
        <end position="114"/>
    </location>
    <ligand>
        <name>ATP</name>
        <dbReference type="ChEBI" id="CHEBI:30616"/>
    </ligand>
</feature>
<reference key="1">
    <citation type="journal article" date="2009" name="J. Bacteriol.">
        <title>Complete genome sequence of Macrococcus caseolyticus strain JCSCS5402, reflecting the ancestral genome of the human-pathogenic staphylococci.</title>
        <authorList>
            <person name="Baba T."/>
            <person name="Kuwahara-Arai K."/>
            <person name="Uchiyama I."/>
            <person name="Takeuchi F."/>
            <person name="Ito T."/>
            <person name="Hiramatsu K."/>
        </authorList>
    </citation>
    <scope>NUCLEOTIDE SEQUENCE [LARGE SCALE GENOMIC DNA]</scope>
    <source>
        <strain>JCSC5402</strain>
    </source>
</reference>
<proteinExistence type="inferred from homology"/>
<protein>
    <recommendedName>
        <fullName evidence="1">UDP-N-acetylmuramate--L-alanine ligase</fullName>
        <ecNumber evidence="1">6.3.2.8</ecNumber>
    </recommendedName>
    <alternativeName>
        <fullName evidence="1">UDP-N-acetylmuramoyl-L-alanine synthetase</fullName>
    </alternativeName>
</protein>
<gene>
    <name evidence="1" type="primary">murC</name>
    <name type="ordered locus">MCCL_1417</name>
</gene>
<sequence length="431" mass="48264">MTLYHFVGIKGSGMSALAHILFDMGETVQGSDIEKEFFTEKSLREKGITILPFNQENIKEGMTIIAGNAFNDDHEEIVRAHELGLTVTRYHDFLGNFMSQYTSVAVTGSHGKTSTTGLLSHVMNGDKKTSYLIGDGTGMGMPGSEYFAFEACEYRRHFLSYSPDYAIITNIDFDHPDYFASMSDVFNAFQEMTKKVKKAIVACGDDENLRDIEADIPIYYYGFKEDNKVVAKNMKTTPQGTQFEVYIDGELFDTFVTPMYGDHQVLNALAVITICHLEGLDNAAVKHALSTFGGVKRRFSEKIQDEQILIDDYAHHPTEIKATLQSAHLKYPERKVIAIFQPHTFSRTSAFLEDFANSLKLADKVYLCDIFGSVREDSGELTIGDLQILIPGAELINESNVNLLKQYKDAVVIFMGAGDIQKIQVAYENLK</sequence>
<evidence type="ECO:0000255" key="1">
    <source>
        <dbReference type="HAMAP-Rule" id="MF_00046"/>
    </source>
</evidence>
<dbReference type="EC" id="6.3.2.8" evidence="1"/>
<dbReference type="EMBL" id="AP009484">
    <property type="protein sequence ID" value="BAH18124.1"/>
    <property type="molecule type" value="Genomic_DNA"/>
</dbReference>
<dbReference type="RefSeq" id="WP_012657322.1">
    <property type="nucleotide sequence ID" value="NC_011999.1"/>
</dbReference>
<dbReference type="SMR" id="B9E7F6"/>
<dbReference type="STRING" id="458233.MCCL_1417"/>
<dbReference type="KEGG" id="mcl:MCCL_1417"/>
<dbReference type="eggNOG" id="COG0773">
    <property type="taxonomic scope" value="Bacteria"/>
</dbReference>
<dbReference type="HOGENOM" id="CLU_028104_1_0_9"/>
<dbReference type="OrthoDB" id="9804126at2"/>
<dbReference type="UniPathway" id="UPA00219"/>
<dbReference type="Proteomes" id="UP000001383">
    <property type="component" value="Chromosome"/>
</dbReference>
<dbReference type="GO" id="GO:0005737">
    <property type="term" value="C:cytoplasm"/>
    <property type="evidence" value="ECO:0007669"/>
    <property type="project" value="UniProtKB-SubCell"/>
</dbReference>
<dbReference type="GO" id="GO:0005524">
    <property type="term" value="F:ATP binding"/>
    <property type="evidence" value="ECO:0007669"/>
    <property type="project" value="UniProtKB-UniRule"/>
</dbReference>
<dbReference type="GO" id="GO:0008763">
    <property type="term" value="F:UDP-N-acetylmuramate-L-alanine ligase activity"/>
    <property type="evidence" value="ECO:0007669"/>
    <property type="project" value="UniProtKB-UniRule"/>
</dbReference>
<dbReference type="GO" id="GO:0051301">
    <property type="term" value="P:cell division"/>
    <property type="evidence" value="ECO:0007669"/>
    <property type="project" value="UniProtKB-KW"/>
</dbReference>
<dbReference type="GO" id="GO:0071555">
    <property type="term" value="P:cell wall organization"/>
    <property type="evidence" value="ECO:0007669"/>
    <property type="project" value="UniProtKB-KW"/>
</dbReference>
<dbReference type="GO" id="GO:0009252">
    <property type="term" value="P:peptidoglycan biosynthetic process"/>
    <property type="evidence" value="ECO:0007669"/>
    <property type="project" value="UniProtKB-UniRule"/>
</dbReference>
<dbReference type="GO" id="GO:0008360">
    <property type="term" value="P:regulation of cell shape"/>
    <property type="evidence" value="ECO:0007669"/>
    <property type="project" value="UniProtKB-KW"/>
</dbReference>
<dbReference type="Gene3D" id="3.90.190.20">
    <property type="entry name" value="Mur ligase, C-terminal domain"/>
    <property type="match status" value="1"/>
</dbReference>
<dbReference type="Gene3D" id="3.40.1190.10">
    <property type="entry name" value="Mur-like, catalytic domain"/>
    <property type="match status" value="1"/>
</dbReference>
<dbReference type="Gene3D" id="3.40.50.720">
    <property type="entry name" value="NAD(P)-binding Rossmann-like Domain"/>
    <property type="match status" value="1"/>
</dbReference>
<dbReference type="HAMAP" id="MF_00046">
    <property type="entry name" value="MurC"/>
    <property type="match status" value="1"/>
</dbReference>
<dbReference type="InterPro" id="IPR036565">
    <property type="entry name" value="Mur-like_cat_sf"/>
</dbReference>
<dbReference type="InterPro" id="IPR004101">
    <property type="entry name" value="Mur_ligase_C"/>
</dbReference>
<dbReference type="InterPro" id="IPR036615">
    <property type="entry name" value="Mur_ligase_C_dom_sf"/>
</dbReference>
<dbReference type="InterPro" id="IPR013221">
    <property type="entry name" value="Mur_ligase_cen"/>
</dbReference>
<dbReference type="InterPro" id="IPR000713">
    <property type="entry name" value="Mur_ligase_N"/>
</dbReference>
<dbReference type="InterPro" id="IPR050061">
    <property type="entry name" value="MurCDEF_pg_biosynth"/>
</dbReference>
<dbReference type="InterPro" id="IPR005758">
    <property type="entry name" value="UDP-N-AcMur_Ala_ligase_MurC"/>
</dbReference>
<dbReference type="NCBIfam" id="TIGR01082">
    <property type="entry name" value="murC"/>
    <property type="match status" value="1"/>
</dbReference>
<dbReference type="PANTHER" id="PTHR43445:SF3">
    <property type="entry name" value="UDP-N-ACETYLMURAMATE--L-ALANINE LIGASE"/>
    <property type="match status" value="1"/>
</dbReference>
<dbReference type="PANTHER" id="PTHR43445">
    <property type="entry name" value="UDP-N-ACETYLMURAMATE--L-ALANINE LIGASE-RELATED"/>
    <property type="match status" value="1"/>
</dbReference>
<dbReference type="Pfam" id="PF01225">
    <property type="entry name" value="Mur_ligase"/>
    <property type="match status" value="1"/>
</dbReference>
<dbReference type="Pfam" id="PF02875">
    <property type="entry name" value="Mur_ligase_C"/>
    <property type="match status" value="1"/>
</dbReference>
<dbReference type="Pfam" id="PF08245">
    <property type="entry name" value="Mur_ligase_M"/>
    <property type="match status" value="1"/>
</dbReference>
<dbReference type="SUPFAM" id="SSF51984">
    <property type="entry name" value="MurCD N-terminal domain"/>
    <property type="match status" value="1"/>
</dbReference>
<dbReference type="SUPFAM" id="SSF53623">
    <property type="entry name" value="MurD-like peptide ligases, catalytic domain"/>
    <property type="match status" value="1"/>
</dbReference>
<dbReference type="SUPFAM" id="SSF53244">
    <property type="entry name" value="MurD-like peptide ligases, peptide-binding domain"/>
    <property type="match status" value="1"/>
</dbReference>
<accession>B9E7F6</accession>
<organism>
    <name type="scientific">Macrococcus caseolyticus (strain JCSC5402)</name>
    <name type="common">Macrococcoides caseolyticum</name>
    <dbReference type="NCBI Taxonomy" id="458233"/>
    <lineage>
        <taxon>Bacteria</taxon>
        <taxon>Bacillati</taxon>
        <taxon>Bacillota</taxon>
        <taxon>Bacilli</taxon>
        <taxon>Bacillales</taxon>
        <taxon>Staphylococcaceae</taxon>
        <taxon>Macrococcoides</taxon>
    </lineage>
</organism>
<comment type="function">
    <text evidence="1">Cell wall formation.</text>
</comment>
<comment type="catalytic activity">
    <reaction evidence="1">
        <text>UDP-N-acetyl-alpha-D-muramate + L-alanine + ATP = UDP-N-acetyl-alpha-D-muramoyl-L-alanine + ADP + phosphate + H(+)</text>
        <dbReference type="Rhea" id="RHEA:23372"/>
        <dbReference type="ChEBI" id="CHEBI:15378"/>
        <dbReference type="ChEBI" id="CHEBI:30616"/>
        <dbReference type="ChEBI" id="CHEBI:43474"/>
        <dbReference type="ChEBI" id="CHEBI:57972"/>
        <dbReference type="ChEBI" id="CHEBI:70757"/>
        <dbReference type="ChEBI" id="CHEBI:83898"/>
        <dbReference type="ChEBI" id="CHEBI:456216"/>
        <dbReference type="EC" id="6.3.2.8"/>
    </reaction>
</comment>
<comment type="pathway">
    <text evidence="1">Cell wall biogenesis; peptidoglycan biosynthesis.</text>
</comment>
<comment type="subcellular location">
    <subcellularLocation>
        <location evidence="1">Cytoplasm</location>
    </subcellularLocation>
</comment>
<comment type="similarity">
    <text evidence="1">Belongs to the MurCDEF family.</text>
</comment>
<keyword id="KW-0067">ATP-binding</keyword>
<keyword id="KW-0131">Cell cycle</keyword>
<keyword id="KW-0132">Cell division</keyword>
<keyword id="KW-0133">Cell shape</keyword>
<keyword id="KW-0961">Cell wall biogenesis/degradation</keyword>
<keyword id="KW-0963">Cytoplasm</keyword>
<keyword id="KW-0436">Ligase</keyword>
<keyword id="KW-0547">Nucleotide-binding</keyword>
<keyword id="KW-0573">Peptidoglycan synthesis</keyword>
<keyword id="KW-1185">Reference proteome</keyword>